<evidence type="ECO:0000250" key="1">
    <source>
        <dbReference type="UniProtKB" id="P01514"/>
    </source>
</evidence>
<evidence type="ECO:0000250" key="2">
    <source>
        <dbReference type="UniProtKB" id="P84914"/>
    </source>
</evidence>
<evidence type="ECO:0000269" key="3">
    <source>
    </source>
</evidence>
<evidence type="ECO:0000303" key="4">
    <source>
    </source>
</evidence>
<evidence type="ECO:0000305" key="5"/>
<evidence type="ECO:0000305" key="6">
    <source>
    </source>
</evidence>
<accession>P0DRA5</accession>
<protein>
    <recommendedName>
        <fullName evidence="4">Mastoparan PDD-A</fullName>
    </recommendedName>
</protein>
<keyword id="KW-0027">Amidation</keyword>
<keyword id="KW-0044">Antibiotic</keyword>
<keyword id="KW-0929">Antimicrobial</keyword>
<keyword id="KW-0903">Direct protein sequencing</keyword>
<keyword id="KW-1213">G-protein coupled receptor impairing toxin</keyword>
<keyword id="KW-0391">Immunity</keyword>
<keyword id="KW-0399">Innate immunity</keyword>
<keyword id="KW-0472">Membrane</keyword>
<keyword id="KW-0964">Secreted</keyword>
<keyword id="KW-1052">Target cell membrane</keyword>
<keyword id="KW-1053">Target membrane</keyword>
<keyword id="KW-0800">Toxin</keyword>
<reference key="1">
    <citation type="journal article" date="2008" name="Peptides">
        <title>New potent antimicrobial peptides from the venom of Polistinae wasps and their analogs.</title>
        <authorList>
            <person name="Cerovsky V."/>
            <person name="Slaninova J."/>
            <person name="Fucik V."/>
            <person name="Hulacova H."/>
            <person name="Borovickova L."/>
            <person name="Jezek R."/>
            <person name="Bednarova L."/>
        </authorList>
    </citation>
    <scope>PROTEIN SEQUENCE</scope>
    <scope>AMIDATION AT VAL-14</scope>
    <scope>SUBCELLULAR LOCATION</scope>
    <scope>SYNTHESIS</scope>
    <scope>FUNCTION</scope>
    <source>
        <tissue>Venom</tissue>
    </source>
</reference>
<proteinExistence type="evidence at protein level"/>
<dbReference type="GO" id="GO:0005576">
    <property type="term" value="C:extracellular region"/>
    <property type="evidence" value="ECO:0007669"/>
    <property type="project" value="UniProtKB-SubCell"/>
</dbReference>
<dbReference type="GO" id="GO:0016020">
    <property type="term" value="C:membrane"/>
    <property type="evidence" value="ECO:0007669"/>
    <property type="project" value="UniProtKB-KW"/>
</dbReference>
<dbReference type="GO" id="GO:0044218">
    <property type="term" value="C:other organism cell membrane"/>
    <property type="evidence" value="ECO:0007669"/>
    <property type="project" value="UniProtKB-KW"/>
</dbReference>
<dbReference type="GO" id="GO:0090729">
    <property type="term" value="F:toxin activity"/>
    <property type="evidence" value="ECO:0007669"/>
    <property type="project" value="UniProtKB-KW"/>
</dbReference>
<dbReference type="GO" id="GO:0042742">
    <property type="term" value="P:defense response to bacterium"/>
    <property type="evidence" value="ECO:0007669"/>
    <property type="project" value="UniProtKB-KW"/>
</dbReference>
<dbReference type="GO" id="GO:0045087">
    <property type="term" value="P:innate immune response"/>
    <property type="evidence" value="ECO:0007669"/>
    <property type="project" value="UniProtKB-KW"/>
</dbReference>
<comment type="function">
    <text evidence="1 2 3">Antimicrobial peptide. Has activity against both Gram-positive and Gram-negative bacteria (B.subtilis (MIC=11.8 uM), E.coli (MIC=7.5 uM)). Shows mast cell degranulation activity (EC(50)=15-26 uM). Has no hemolytic activity (IC(50)&gt;100 uM) (PubMed:18375018). Its mast cell degranulation activity may be related to the activation of G-protein coupled receptors in mast cells as well as interaction with other proteins located in cell endosomal membranes in the mast cells (By similarity).</text>
</comment>
<comment type="subcellular location">
    <subcellularLocation>
        <location evidence="3">Secreted</location>
    </subcellularLocation>
    <subcellularLocation>
        <location evidence="5">Target cell membrane</location>
    </subcellularLocation>
    <text evidence="6">Assumes an amphipathic alpha-helical conformation in a membrane-like environment.</text>
</comment>
<comment type="tissue specificity">
    <text evidence="6">Expressed by the venom gland.</text>
</comment>
<comment type="miscellaneous">
    <text evidence="3">Most of synthetic analogs show a decreased antimicrobial and hemolytic activity.</text>
</comment>
<comment type="similarity">
    <text evidence="5">Belongs to the MCD family. Mastoparan subfamily.</text>
</comment>
<name>MASTA_POLDR</name>
<organism>
    <name type="scientific">Polistes dorsalis</name>
    <name type="common">Paper wasp</name>
    <dbReference type="NCBI Taxonomy" id="34729"/>
    <lineage>
        <taxon>Eukaryota</taxon>
        <taxon>Metazoa</taxon>
        <taxon>Ecdysozoa</taxon>
        <taxon>Arthropoda</taxon>
        <taxon>Hexapoda</taxon>
        <taxon>Insecta</taxon>
        <taxon>Pterygota</taxon>
        <taxon>Neoptera</taxon>
        <taxon>Endopterygota</taxon>
        <taxon>Hymenoptera</taxon>
        <taxon>Apocrita</taxon>
        <taxon>Aculeata</taxon>
        <taxon>Vespoidea</taxon>
        <taxon>Vespidae</taxon>
        <taxon>Polistinae</taxon>
        <taxon>Polistini</taxon>
        <taxon>Polistes</taxon>
    </lineage>
</organism>
<sequence length="14" mass="1759">INWKKIFEKVKNLV</sequence>
<feature type="peptide" id="PRO_0000458808" description="Mastoparan PDD-A" evidence="3">
    <location>
        <begin position="1"/>
        <end position="14"/>
    </location>
</feature>
<feature type="modified residue" description="Valine amide" evidence="3">
    <location>
        <position position="14"/>
    </location>
</feature>